<evidence type="ECO:0000255" key="1">
    <source>
        <dbReference type="HAMAP-Rule" id="MF_00055"/>
    </source>
</evidence>
<accession>C3NMP4</accession>
<dbReference type="EMBL" id="CP001404">
    <property type="protein sequence ID" value="ACP47864.1"/>
    <property type="molecule type" value="Genomic_DNA"/>
</dbReference>
<dbReference type="RefSeq" id="WP_012717204.1">
    <property type="nucleotide sequence ID" value="NC_012623.1"/>
</dbReference>
<dbReference type="SMR" id="C3NMP4"/>
<dbReference type="GeneID" id="7811726"/>
<dbReference type="KEGG" id="sin:YN1551_0739"/>
<dbReference type="HOGENOM" id="CLU_038085_2_0_2"/>
<dbReference type="Proteomes" id="UP000006818">
    <property type="component" value="Chromosome"/>
</dbReference>
<dbReference type="CDD" id="cd07361">
    <property type="entry name" value="MEMO_like"/>
    <property type="match status" value="1"/>
</dbReference>
<dbReference type="Gene3D" id="3.40.830.10">
    <property type="entry name" value="LigB-like"/>
    <property type="match status" value="1"/>
</dbReference>
<dbReference type="HAMAP" id="MF_00055">
    <property type="entry name" value="MEMO1"/>
    <property type="match status" value="1"/>
</dbReference>
<dbReference type="InterPro" id="IPR002737">
    <property type="entry name" value="MEMO1_fam"/>
</dbReference>
<dbReference type="NCBIfam" id="TIGR04336">
    <property type="entry name" value="AmmeMemoSam_B"/>
    <property type="match status" value="1"/>
</dbReference>
<dbReference type="PANTHER" id="PTHR11060">
    <property type="entry name" value="PROTEIN MEMO1"/>
    <property type="match status" value="1"/>
</dbReference>
<dbReference type="PANTHER" id="PTHR11060:SF0">
    <property type="entry name" value="PROTEIN MEMO1"/>
    <property type="match status" value="1"/>
</dbReference>
<dbReference type="Pfam" id="PF01875">
    <property type="entry name" value="Memo"/>
    <property type="match status" value="1"/>
</dbReference>
<reference key="1">
    <citation type="journal article" date="2009" name="Proc. Natl. Acad. Sci. U.S.A.">
        <title>Biogeography of the Sulfolobus islandicus pan-genome.</title>
        <authorList>
            <person name="Reno M.L."/>
            <person name="Held N.L."/>
            <person name="Fields C.J."/>
            <person name="Burke P.V."/>
            <person name="Whitaker R.J."/>
        </authorList>
    </citation>
    <scope>NUCLEOTIDE SEQUENCE [LARGE SCALE GENOMIC DNA]</scope>
    <source>
        <strain>Y.N.15.51 / Yellowstone #2</strain>
    </source>
</reference>
<proteinExistence type="inferred from homology"/>
<protein>
    <recommendedName>
        <fullName evidence="1">MEMO1 family protein YN1551_0739</fullName>
    </recommendedName>
</protein>
<sequence>MKRLPAVAGSFYESDPKKLKMQIEWSFRHNIGPRDIPKQTYEKKKRDNLFFVVPHAGYIYSGPVAAHSYYYLVSEGRPDVVIILGPNHTGLGSYVSAWPKGEWETPLGSVKIDEEILMQLVKESEVIDLDEKSHLYEHSIEVQLPFLQYFFDDDFKIVPIVIMMQTPEIAEFLADAIYNVMQKNPDKDIVVLASSDMNHYDPHEITVKKDVEAIEKIQQLDYKGLYEVVEGKDVTLCGYGPIMVNLILAKKFGKKAYILKHATSGDTSGPKDSVVGYLAARFGS</sequence>
<comment type="similarity">
    <text evidence="1">Belongs to the MEMO1 family.</text>
</comment>
<organism>
    <name type="scientific">Saccharolobus islandicus (strain Y.N.15.51 / Yellowstone #2)</name>
    <name type="common">Sulfolobus islandicus</name>
    <dbReference type="NCBI Taxonomy" id="419942"/>
    <lineage>
        <taxon>Archaea</taxon>
        <taxon>Thermoproteota</taxon>
        <taxon>Thermoprotei</taxon>
        <taxon>Sulfolobales</taxon>
        <taxon>Sulfolobaceae</taxon>
        <taxon>Saccharolobus</taxon>
    </lineage>
</organism>
<name>Y739_SACI1</name>
<feature type="chain" id="PRO_1000202328" description="MEMO1 family protein YN1551_0739">
    <location>
        <begin position="1"/>
        <end position="284"/>
    </location>
</feature>
<gene>
    <name type="ordered locus">YN1551_0739</name>
</gene>